<accession>Q3ZK58</accession>
<feature type="chain" id="PRO_0000368107" description="Outer capsid protein VP4" evidence="1">
    <location>
        <begin position="1"/>
        <end position="776"/>
    </location>
</feature>
<feature type="chain" id="PRO_0000368108" description="Outer capsid protein VP8*" evidence="1">
    <location>
        <begin position="1"/>
        <end position="231"/>
    </location>
</feature>
<feature type="chain" id="PRO_0000368109" description="Outer capsid protein VP5*" evidence="1">
    <location>
        <begin position="248"/>
        <end position="776"/>
    </location>
</feature>
<feature type="region of interest" description="Spike head" evidence="1">
    <location>
        <begin position="65"/>
        <end position="224"/>
    </location>
</feature>
<feature type="region of interest" description="Spike body and stalk (antigen domain)" evidence="1">
    <location>
        <begin position="248"/>
        <end position="479"/>
    </location>
</feature>
<feature type="region of interest" description="Hydrophobic; possible role in virus entry into host cell" evidence="1">
    <location>
        <begin position="389"/>
        <end position="409"/>
    </location>
</feature>
<feature type="region of interest" description="Spike foot" evidence="1">
    <location>
        <begin position="510"/>
        <end position="776"/>
    </location>
</feature>
<feature type="coiled-coil region" evidence="1">
    <location>
        <begin position="484"/>
        <end position="511"/>
    </location>
</feature>
<feature type="short sequence motif" description="DGE motif; interaction with ITGA2/ITGB1 heterodimer" evidence="1">
    <location>
        <begin position="308"/>
        <end position="310"/>
    </location>
</feature>
<feature type="short sequence motif" description="YGL motif; interaction with ITGA4" evidence="1">
    <location>
        <begin position="448"/>
        <end position="450"/>
    </location>
</feature>
<feature type="site" description="Cleavage" evidence="1">
    <location>
        <begin position="231"/>
        <end position="232"/>
    </location>
</feature>
<feature type="site" description="Cleavage" evidence="1">
    <location>
        <begin position="241"/>
        <end position="242"/>
    </location>
</feature>
<feature type="site" description="Cleavage; associated with enhancement of infectivity" evidence="1">
    <location>
        <begin position="247"/>
        <end position="248"/>
    </location>
</feature>
<feature type="disulfide bond" evidence="1">
    <location>
        <begin position="318"/>
        <end position="380"/>
    </location>
</feature>
<organism>
    <name type="scientific">Rotavirus A (isolate RVA/Human/Belgium/B4106/2000/G3P11[14])</name>
    <name type="common">RV-A</name>
    <name type="synonym">Rotavirus A (isolate B4106)</name>
    <dbReference type="NCBI Taxonomy" id="578843"/>
    <lineage>
        <taxon>Viruses</taxon>
        <taxon>Riboviria</taxon>
        <taxon>Orthornavirae</taxon>
        <taxon>Duplornaviricota</taxon>
        <taxon>Resentoviricetes</taxon>
        <taxon>Reovirales</taxon>
        <taxon>Sedoreoviridae</taxon>
        <taxon>Rotavirus</taxon>
        <taxon>Rotavirus A</taxon>
    </lineage>
</organism>
<reference key="1">
    <citation type="journal article" date="2006" name="J. Virol.">
        <title>Full genomic analysis of human rotavirus strain B4106 and lapine rotavirus strain 30/96 provides evidence for interspecies transmission.</title>
        <authorList>
            <person name="Matthijnssens J."/>
            <person name="Rahman M."/>
            <person name="Martella V."/>
            <person name="Xuelei Y."/>
            <person name="De Vos S."/>
            <person name="De Leener K."/>
            <person name="Ciarlet M."/>
            <person name="Buonavoglia C."/>
            <person name="Van Ranst M."/>
        </authorList>
    </citation>
    <scope>NUCLEOTIDE SEQUENCE [GENOMIC RNA]</scope>
</reference>
<keyword id="KW-0167">Capsid protein</keyword>
<keyword id="KW-0175">Coiled coil</keyword>
<keyword id="KW-1015">Disulfide bond</keyword>
<keyword id="KW-0348">Hemagglutinin</keyword>
<keyword id="KW-1032">Host cell membrane</keyword>
<keyword id="KW-1035">Host cytoplasm</keyword>
<keyword id="KW-1037">Host cytoskeleton</keyword>
<keyword id="KW-1038">Host endoplasmic reticulum</keyword>
<keyword id="KW-1043">Host membrane</keyword>
<keyword id="KW-0945">Host-virus interaction</keyword>
<keyword id="KW-0472">Membrane</keyword>
<keyword id="KW-1152">Outer capsid protein</keyword>
<keyword id="KW-1161">Viral attachment to host cell</keyword>
<keyword id="KW-1162">Viral penetration into host cytoplasm</keyword>
<keyword id="KW-1173">Viral penetration via permeabilization of host membrane</keyword>
<keyword id="KW-0946">Virion</keyword>
<keyword id="KW-1160">Virus entry into host cell</keyword>
<organismHost>
    <name type="scientific">Homo sapiens</name>
    <name type="common">Human</name>
    <dbReference type="NCBI Taxonomy" id="9606"/>
</organismHost>
<evidence type="ECO:0000255" key="1">
    <source>
        <dbReference type="HAMAP-Rule" id="MF_04132"/>
    </source>
</evidence>
<name>VP4_ROT41</name>
<protein>
    <recommendedName>
        <fullName evidence="1">Outer capsid protein VP4</fullName>
    </recommendedName>
    <alternativeName>
        <fullName evidence="1">Hemagglutinin</fullName>
    </alternativeName>
    <component>
        <recommendedName>
            <fullName evidence="1">Outer capsid protein VP8*</fullName>
        </recommendedName>
    </component>
    <component>
        <recommendedName>
            <fullName evidence="1">Outer capsid protein VP5*</fullName>
        </recommendedName>
    </component>
</protein>
<sequence length="776" mass="86806">MASLIYRQLLSNSYVTNISDEVSEIGARKTTNVTVNPGPFAQTGYAPVDWGHGELSDSTLVQPTLDGPYQPTTFNLPINYWMLIAPTQAGRVAEGTNTTNRWFACVLVEPSVQSTRREYVLDGQTVQLQVSNDSSTLWKFILFIKLEKNGTYSQYSTLSTSNKLCAWMKREGRVYWYTGTTPNASESYYLTINNDNSHVSCDAEFYLLPRSQTDLCDQYINNGLPPVQNTRNVVPVSITSREIRYTKAQVNEDIVVSKTSLWKEMQYNRDIMIRFKFANSIVKSGGLGYKWSEISFKPMNYQYTYTRDGEEITAHTTCSVNGVNDFSYNGGTLPTDFSISRFEVIKENSFVYIDYWDDSQAFRNMVYVRSLSANLNDVVCSGGDYSFALPVGAWPVMSGGAVTLSSAGVTLSTQFTDYVSLNSLRFRFRLTVSEPSFSISRTRLSGIYGLPAANPNNNVEYYEIAGRFSLISLVPTNDDYQTPIANSVTVRQDLERQLGELREEFNALSQEIALSQLIDLATLPLDMFSMFSGIKSTVEAVKSMTTNVMKKFKTSNLANAISDLTNSMSDAASSVSRSASVRSISSNAASRISTAIQASDDLRTVADASTQISSVSRSLRLREFTTQTDNLSFDDISAAVLKTKLDKSTQISQSTIPDIISESSEKFIPMRTYRVIDNDTAFETGIDGTFYAYRVDTFDEVPFDVERFNKLITDSPVLSAIIDFKTLKNLNDNYGITKTQAMELLQSNPKTLKEFINNNNPIIRNRIENLIAQCRL</sequence>
<comment type="function">
    <molecule>Outer capsid protein VP4</molecule>
    <text evidence="1">Spike-forming protein that mediates virion attachment to the host epithelial cell receptors and plays a major role in cell penetration, determination of host range restriction and virulence. Rotavirus attachment and entry into the host cell probably involves multiple sequential contacts between the outer capsid proteins VP4 and VP7, and the cell receptors. It is subsequently lost, together with VP7, following virus entry into the host cell. Following entry into the host cell, low intracellular or intravesicular Ca(2+) concentration probably causes the calcium-stabilized VP7 trimers to dissociate from the virion. This step is probably necessary for the membrane-disrupting entry step and the release of VP4, which is locked onto the virion by VP7. During the virus exit from the host cell, VP4 seems to be required to target the newly formed virions to the host cell lipid rafts.</text>
</comment>
<comment type="function">
    <molecule>Outer capsid protein VP5*</molecule>
    <text evidence="1">Forms the spike 'foot' and 'body' and acts as a membrane permeabilization protein that mediates release of viral particles from endosomal compartments into the cytoplasm. During entry, the part of VP5* that protrudes from the virus folds back on itself and reorganizes from a local dimer to a trimer. This reorganization may be linked to membrane penetration by exposing VP5* hydrophobic region. In integrin-dependent strains, VP5* targets the integrin heterodimer ITGA2/ITGB1 for cell attachment.</text>
</comment>
<comment type="function">
    <molecule>Outer capsid protein VP8*</molecule>
    <text evidence="1">Forms the head of the spikes and mediates the recognition of specific host cell surface glycans. It is the viral hemagglutinin and an important target of neutralizing antibodies. In sialic acid-dependent strains, VP8* binds to host cell sialic acid, most probably a ganglioside, providing the initial contact. In some other strains, VP8* mediates the attachment to histo-blood group antigens (HBGAs) for viral entry.</text>
</comment>
<comment type="subunit">
    <molecule>Outer capsid protein VP4</molecule>
    <text evidence="1">Homotrimer. VP4 adopts a dimeric appearance above the capsid surface, while forming a trimeric base anchored inside the capsid layer. Only hints of the third molecule are observed above the capsid surface. It probably performs a series of molecular rearrangements during viral entry. Prior to trypsin cleavage, it is flexible. The priming trypsin cleavage triggers its rearrangement into rigid spikes with approximate two-fold symmetry of their protruding parts. After an unknown second triggering event, cleaved VP4 may undergo another rearrangement, in which two VP5* subunits fold back on themselves and join a third subunit to form a tightly associated trimer, shaped like a folded umbrella. Interacts with VP6. Interacts with VP7.</text>
</comment>
<comment type="subunit">
    <molecule>Outer capsid protein VP5*</molecule>
    <text evidence="1">Homotrimer. The trimer is coiled-coil stabilized by its C-terminus, however, its N-terminus, known as antigen domain or 'body', seems to be flexible allowing it to self-associate either as a dimer or a trimer.</text>
</comment>
<comment type="subcellular location">
    <molecule>Outer capsid protein VP4</molecule>
    <subcellularLocation>
        <location evidence="1">Virion</location>
    </subcellularLocation>
    <subcellularLocation>
        <location evidence="1">Host rough endoplasmic reticulum</location>
    </subcellularLocation>
    <subcellularLocation>
        <location evidence="1">Host cell membrane</location>
    </subcellularLocation>
    <subcellularLocation>
        <location evidence="1">Host cytoplasm</location>
        <location evidence="1">Host cytoskeleton</location>
    </subcellularLocation>
    <subcellularLocation>
        <location evidence="1">Host endoplasmic reticulum-Golgi intermediate compartment</location>
    </subcellularLocation>
    <text evidence="1">The outer layer contains 180 copies of VP4, grouped as 60 dimers. Immature double-layered particles assembled in the cytoplasm bud across the membrane of the endoplasmic reticulum, acquiring during this process a transient lipid membrane that is modified with the ER resident viral glycoproteins NSP4 and VP7; these enveloped particles also contain VP4. As the particles move towards the interior of the ER cisternae, the transient lipid membrane and the non-structural protein NSP4 are lost, while the virus surface proteins VP4 and VP7 rearrange to form the outermost virus protein layer, yielding mature infectious triple-layered particles. VP4 also seems to associate with lipid rafts of the host cell membrane probably for the exit of the virus from the infected cell by an alternate pathway.</text>
</comment>
<comment type="subcellular location">
    <molecule>Outer capsid protein VP8*</molecule>
    <subcellularLocation>
        <location evidence="1">Virion</location>
    </subcellularLocation>
    <text evidence="1">Outer capsid protein.</text>
</comment>
<comment type="subcellular location">
    <molecule>Outer capsid protein VP5*</molecule>
    <subcellularLocation>
        <location evidence="1">Virion</location>
    </subcellularLocation>
    <text evidence="1">Outer capsid protein.</text>
</comment>
<comment type="domain">
    <molecule>Outer capsid protein VP4</molecule>
    <text evidence="1">The VP4 spike is divided into a foot, a stalk and body, and a head.</text>
</comment>
<comment type="PTM">
    <molecule>Outer capsid protein VP4</molecule>
    <text evidence="1">Proteolytic cleavage by trypsin results in activation of VP4 functions and greatly increases infectivity. The penetration into the host cell is dependent on trypsin treatment of VP4. It produces two peptides, VP5* and VP8* that remain associated with the virion. Cleavage of VP4 by trypsin probably occurs in vivo in the lumen of the intestine prior to infection of enterocytes. Trypsin seems to be incorporated into the three-layered viral particles but remains inactive as long as the viral outer capsid is intact and would only be activated upon the solubilization of the latter.</text>
</comment>
<comment type="miscellaneous">
    <text evidence="1">In group A rotaviruses, VP4 defines the P serotype.</text>
</comment>
<comment type="miscellaneous">
    <text evidence="1">Some rotavirus strains are neuraminidase-sensitive and require sialic acid to attach to the cell surface. Some rotavirus strains are integrin-dependent. Some rotavirus strains depend on ganglioside for their entry into the host cell. Hsp70 also seems to be involved in the entry of some strains.</text>
</comment>
<comment type="similarity">
    <text evidence="1">Belongs to the rotavirus VP4 family.</text>
</comment>
<dbReference type="EMBL" id="AY740738">
    <property type="protein sequence ID" value="AAU43796.1"/>
    <property type="molecule type" value="Genomic_RNA"/>
</dbReference>
<dbReference type="SMR" id="Q3ZK58"/>
<dbReference type="Proteomes" id="UP000008655">
    <property type="component" value="Genome"/>
</dbReference>
<dbReference type="GO" id="GO:0044172">
    <property type="term" value="C:host cell endoplasmic reticulum-Golgi intermediate compartment"/>
    <property type="evidence" value="ECO:0007669"/>
    <property type="project" value="UniProtKB-SubCell"/>
</dbReference>
<dbReference type="GO" id="GO:0020002">
    <property type="term" value="C:host cell plasma membrane"/>
    <property type="evidence" value="ECO:0007669"/>
    <property type="project" value="UniProtKB-SubCell"/>
</dbReference>
<dbReference type="GO" id="GO:0044168">
    <property type="term" value="C:host cell rough endoplasmic reticulum"/>
    <property type="evidence" value="ECO:0007669"/>
    <property type="project" value="UniProtKB-SubCell"/>
</dbReference>
<dbReference type="GO" id="GO:0044163">
    <property type="term" value="C:host cytoskeleton"/>
    <property type="evidence" value="ECO:0007669"/>
    <property type="project" value="UniProtKB-SubCell"/>
</dbReference>
<dbReference type="GO" id="GO:0016020">
    <property type="term" value="C:membrane"/>
    <property type="evidence" value="ECO:0007669"/>
    <property type="project" value="UniProtKB-KW"/>
</dbReference>
<dbReference type="GO" id="GO:0039624">
    <property type="term" value="C:viral outer capsid"/>
    <property type="evidence" value="ECO:0007669"/>
    <property type="project" value="UniProtKB-UniRule"/>
</dbReference>
<dbReference type="GO" id="GO:0039665">
    <property type="term" value="P:permeabilization of host organelle membrane involved in viral entry into host cell"/>
    <property type="evidence" value="ECO:0007669"/>
    <property type="project" value="UniProtKB-UniRule"/>
</dbReference>
<dbReference type="GO" id="GO:0019062">
    <property type="term" value="P:virion attachment to host cell"/>
    <property type="evidence" value="ECO:0007669"/>
    <property type="project" value="UniProtKB-UniRule"/>
</dbReference>
<dbReference type="Gene3D" id="1.20.5.170">
    <property type="match status" value="1"/>
</dbReference>
<dbReference type="Gene3D" id="2.60.120.200">
    <property type="match status" value="1"/>
</dbReference>
<dbReference type="HAMAP" id="MF_04132">
    <property type="entry name" value="Rota_A_VP4"/>
    <property type="match status" value="1"/>
</dbReference>
<dbReference type="HAMAP" id="MF_04125">
    <property type="entry name" value="Rota_VP4"/>
    <property type="match status" value="1"/>
</dbReference>
<dbReference type="InterPro" id="IPR013320">
    <property type="entry name" value="ConA-like_dom_sf"/>
</dbReference>
<dbReference type="InterPro" id="IPR042546">
    <property type="entry name" value="Rota_A_VP4"/>
</dbReference>
<dbReference type="InterPro" id="IPR035330">
    <property type="entry name" value="Rota_VP4_MID"/>
</dbReference>
<dbReference type="InterPro" id="IPR038017">
    <property type="entry name" value="Rota_VP4_MID_sf"/>
</dbReference>
<dbReference type="InterPro" id="IPR000416">
    <property type="entry name" value="VP4_concanavalin-like"/>
</dbReference>
<dbReference type="InterPro" id="IPR035329">
    <property type="entry name" value="VP4_helical"/>
</dbReference>
<dbReference type="Pfam" id="PF17477">
    <property type="entry name" value="Rota_VP4_MID"/>
    <property type="match status" value="1"/>
</dbReference>
<dbReference type="Pfam" id="PF00426">
    <property type="entry name" value="VP4_haemagglut"/>
    <property type="match status" value="1"/>
</dbReference>
<dbReference type="Pfam" id="PF17478">
    <property type="entry name" value="VP4_helical"/>
    <property type="match status" value="1"/>
</dbReference>
<dbReference type="SUPFAM" id="SSF49899">
    <property type="entry name" value="Concanavalin A-like lectins/glucanases"/>
    <property type="match status" value="1"/>
</dbReference>
<dbReference type="SUPFAM" id="SSF111379">
    <property type="entry name" value="VP4 membrane interaction domain"/>
    <property type="match status" value="1"/>
</dbReference>
<proteinExistence type="inferred from homology"/>